<gene>
    <name evidence="1" type="primary">sbmC</name>
    <name type="synonym">gyrI</name>
    <name type="ordered locus">SbBS512_E1226</name>
</gene>
<organism>
    <name type="scientific">Shigella boydii serotype 18 (strain CDC 3083-94 / BS512)</name>
    <dbReference type="NCBI Taxonomy" id="344609"/>
    <lineage>
        <taxon>Bacteria</taxon>
        <taxon>Pseudomonadati</taxon>
        <taxon>Pseudomonadota</taxon>
        <taxon>Gammaproteobacteria</taxon>
        <taxon>Enterobacterales</taxon>
        <taxon>Enterobacteriaceae</taxon>
        <taxon>Shigella</taxon>
    </lineage>
</organism>
<proteinExistence type="inferred from homology"/>
<protein>
    <recommendedName>
        <fullName evidence="1">DNA gyrase inhibitor</fullName>
    </recommendedName>
</protein>
<name>SBMC_SHIB3</name>
<comment type="function">
    <text evidence="1">Inhibits the supercoiling activity of DNA gyrase. Acts by inhibiting DNA gyrase at an early step, prior to (or at the step of) binding of DNA by the gyrase. It protects cells against toxins that target DNA gyrase, by inhibiting activity of these toxins and reducing the formation of lethal double-strand breaks in the cell.</text>
</comment>
<comment type="subunit">
    <text evidence="1">Interacts with DNA gyrase.</text>
</comment>
<comment type="subcellular location">
    <subcellularLocation>
        <location evidence="1">Cytoplasm</location>
    </subcellularLocation>
</comment>
<comment type="similarity">
    <text evidence="1">Belongs to the DNA gyrase inhibitor family.</text>
</comment>
<keyword id="KW-0963">Cytoplasm</keyword>
<keyword id="KW-1185">Reference proteome</keyword>
<keyword id="KW-0346">Stress response</keyword>
<evidence type="ECO:0000255" key="1">
    <source>
        <dbReference type="HAMAP-Rule" id="MF_01896"/>
    </source>
</evidence>
<dbReference type="EMBL" id="CP001063">
    <property type="protein sequence ID" value="ACD07849.1"/>
    <property type="molecule type" value="Genomic_DNA"/>
</dbReference>
<dbReference type="RefSeq" id="WP_001105415.1">
    <property type="nucleotide sequence ID" value="NC_010658.1"/>
</dbReference>
<dbReference type="SMR" id="B2TYH1"/>
<dbReference type="STRING" id="344609.SbBS512_E1226"/>
<dbReference type="KEGG" id="sbc:SbBS512_E1226"/>
<dbReference type="HOGENOM" id="CLU_113664_3_2_6"/>
<dbReference type="Proteomes" id="UP000001030">
    <property type="component" value="Chromosome"/>
</dbReference>
<dbReference type="GO" id="GO:0005737">
    <property type="term" value="C:cytoplasm"/>
    <property type="evidence" value="ECO:0007669"/>
    <property type="project" value="UniProtKB-SubCell"/>
</dbReference>
<dbReference type="GO" id="GO:0008657">
    <property type="term" value="F:DNA topoisomerase type II (double strand cut, ATP-hydrolyzing) inhibitor activity"/>
    <property type="evidence" value="ECO:0007669"/>
    <property type="project" value="UniProtKB-UniRule"/>
</dbReference>
<dbReference type="Gene3D" id="3.20.80.10">
    <property type="entry name" value="Regulatory factor, effector binding domain"/>
    <property type="match status" value="1"/>
</dbReference>
<dbReference type="HAMAP" id="MF_01896">
    <property type="entry name" value="DNA_gyrase_inhibitor"/>
    <property type="match status" value="1"/>
</dbReference>
<dbReference type="InterPro" id="IPR010499">
    <property type="entry name" value="AraC_E-bd"/>
</dbReference>
<dbReference type="InterPro" id="IPR050908">
    <property type="entry name" value="DNA_gyrase_inhibitor"/>
</dbReference>
<dbReference type="InterPro" id="IPR024911">
    <property type="entry name" value="DNA_gyrase_inhibitor_GyrI"/>
</dbReference>
<dbReference type="InterPro" id="IPR029442">
    <property type="entry name" value="GyrI-like"/>
</dbReference>
<dbReference type="InterPro" id="IPR011256">
    <property type="entry name" value="Reg_factor_effector_dom_sf"/>
</dbReference>
<dbReference type="NCBIfam" id="NF007451">
    <property type="entry name" value="PRK10016.1"/>
    <property type="match status" value="1"/>
</dbReference>
<dbReference type="PANTHER" id="PTHR40055:SF2">
    <property type="entry name" value="DNA GYRASE INHIBITOR"/>
    <property type="match status" value="1"/>
</dbReference>
<dbReference type="PANTHER" id="PTHR40055">
    <property type="entry name" value="TRANSCRIPTIONAL REGULATOR YGIV-RELATED"/>
    <property type="match status" value="1"/>
</dbReference>
<dbReference type="Pfam" id="PF06445">
    <property type="entry name" value="GyrI-like"/>
    <property type="match status" value="1"/>
</dbReference>
<dbReference type="SMART" id="SM00871">
    <property type="entry name" value="AraC_E_bind"/>
    <property type="match status" value="1"/>
</dbReference>
<dbReference type="SUPFAM" id="SSF55136">
    <property type="entry name" value="Probable bacterial effector-binding domain"/>
    <property type="match status" value="1"/>
</dbReference>
<reference key="1">
    <citation type="submission" date="2008-05" db="EMBL/GenBank/DDBJ databases">
        <title>Complete sequence of Shigella boydii serotype 18 strain BS512.</title>
        <authorList>
            <person name="Rasko D.A."/>
            <person name="Rosovitz M."/>
            <person name="Maurelli A.T."/>
            <person name="Myers G."/>
            <person name="Seshadri R."/>
            <person name="Cer R."/>
            <person name="Jiang L."/>
            <person name="Ravel J."/>
            <person name="Sebastian Y."/>
        </authorList>
    </citation>
    <scope>NUCLEOTIDE SEQUENCE [LARGE SCALE GENOMIC DNA]</scope>
    <source>
        <strain>CDC 3083-94 / BS512</strain>
    </source>
</reference>
<accession>B2TYH1</accession>
<sequence>MNYEIKQEEKRTVAGFHLVGPWEQTVKKGFEQLMMWVDSKNIVPKEWVAVYYDNPDETPAEKLRCDTVVTVPGYFTLPENSEGVILTEITGGQYAVAVARVVGDDFAKPWYQFFNSLLQDSAYEMLPKPCFEVYLNNGAEDGYWDIEMYVAVQPKHH</sequence>
<feature type="chain" id="PRO_0000409707" description="DNA gyrase inhibitor">
    <location>
        <begin position="1"/>
        <end position="157"/>
    </location>
</feature>